<keyword id="KW-0119">Carbohydrate metabolism</keyword>
<keyword id="KW-0413">Isomerase</keyword>
<keyword id="KW-0479">Metal-binding</keyword>
<keyword id="KW-1185">Reference proteome</keyword>
<proteinExistence type="inferred from homology"/>
<dbReference type="EC" id="5.1.3.1" evidence="1"/>
<dbReference type="EMBL" id="AE005174">
    <property type="protein sequence ID" value="AAG58486.1"/>
    <property type="molecule type" value="Genomic_DNA"/>
</dbReference>
<dbReference type="EMBL" id="BA000007">
    <property type="protein sequence ID" value="BAB37651.1"/>
    <property type="molecule type" value="Genomic_DNA"/>
</dbReference>
<dbReference type="PIR" id="B86003">
    <property type="entry name" value="B86003"/>
</dbReference>
<dbReference type="PIR" id="D91157">
    <property type="entry name" value="D91157"/>
</dbReference>
<dbReference type="RefSeq" id="NP_312255.1">
    <property type="nucleotide sequence ID" value="NC_002695.1"/>
</dbReference>
<dbReference type="RefSeq" id="WP_000816280.1">
    <property type="nucleotide sequence ID" value="NZ_VOAI01000004.1"/>
</dbReference>
<dbReference type="SMR" id="P0AG09"/>
<dbReference type="STRING" id="155864.Z4739"/>
<dbReference type="GeneID" id="915917"/>
<dbReference type="GeneID" id="93778612"/>
<dbReference type="KEGG" id="ece:Z4739"/>
<dbReference type="KEGG" id="ecs:ECs_4228"/>
<dbReference type="PATRIC" id="fig|386585.9.peg.4414"/>
<dbReference type="eggNOG" id="COG0036">
    <property type="taxonomic scope" value="Bacteria"/>
</dbReference>
<dbReference type="HOGENOM" id="CLU_054856_2_1_6"/>
<dbReference type="OMA" id="CHLMIED"/>
<dbReference type="Proteomes" id="UP000000558">
    <property type="component" value="Chromosome"/>
</dbReference>
<dbReference type="Proteomes" id="UP000002519">
    <property type="component" value="Chromosome"/>
</dbReference>
<dbReference type="GO" id="GO:0004750">
    <property type="term" value="F:D-ribulose-phosphate 3-epimerase activity"/>
    <property type="evidence" value="ECO:0007669"/>
    <property type="project" value="UniProtKB-UniRule"/>
</dbReference>
<dbReference type="GO" id="GO:0046872">
    <property type="term" value="F:metal ion binding"/>
    <property type="evidence" value="ECO:0007669"/>
    <property type="project" value="UniProtKB-UniRule"/>
</dbReference>
<dbReference type="GO" id="GO:0019323">
    <property type="term" value="P:pentose catabolic process"/>
    <property type="evidence" value="ECO:0007669"/>
    <property type="project" value="UniProtKB-UniRule"/>
</dbReference>
<dbReference type="GO" id="GO:0006098">
    <property type="term" value="P:pentose-phosphate shunt"/>
    <property type="evidence" value="ECO:0007669"/>
    <property type="project" value="InterPro"/>
</dbReference>
<dbReference type="CDD" id="cd00429">
    <property type="entry name" value="RPE"/>
    <property type="match status" value="1"/>
</dbReference>
<dbReference type="FunFam" id="3.20.20.70:FF:000004">
    <property type="entry name" value="Ribulose-phosphate 3-epimerase"/>
    <property type="match status" value="1"/>
</dbReference>
<dbReference type="Gene3D" id="3.20.20.70">
    <property type="entry name" value="Aldolase class I"/>
    <property type="match status" value="1"/>
</dbReference>
<dbReference type="HAMAP" id="MF_02227">
    <property type="entry name" value="RPE"/>
    <property type="match status" value="1"/>
</dbReference>
<dbReference type="InterPro" id="IPR013785">
    <property type="entry name" value="Aldolase_TIM"/>
</dbReference>
<dbReference type="InterPro" id="IPR026019">
    <property type="entry name" value="Ribul_P_3_epim"/>
</dbReference>
<dbReference type="InterPro" id="IPR000056">
    <property type="entry name" value="Ribul_P_3_epim-like"/>
</dbReference>
<dbReference type="InterPro" id="IPR011060">
    <property type="entry name" value="RibuloseP-bd_barrel"/>
</dbReference>
<dbReference type="NCBIfam" id="NF004076">
    <property type="entry name" value="PRK05581.1-4"/>
    <property type="match status" value="1"/>
</dbReference>
<dbReference type="NCBIfam" id="TIGR01163">
    <property type="entry name" value="rpe"/>
    <property type="match status" value="1"/>
</dbReference>
<dbReference type="PANTHER" id="PTHR11749">
    <property type="entry name" value="RIBULOSE-5-PHOSPHATE-3-EPIMERASE"/>
    <property type="match status" value="1"/>
</dbReference>
<dbReference type="Pfam" id="PF00834">
    <property type="entry name" value="Ribul_P_3_epim"/>
    <property type="match status" value="1"/>
</dbReference>
<dbReference type="PIRSF" id="PIRSF001461">
    <property type="entry name" value="RPE"/>
    <property type="match status" value="1"/>
</dbReference>
<dbReference type="SUPFAM" id="SSF51366">
    <property type="entry name" value="Ribulose-phoshate binding barrel"/>
    <property type="match status" value="1"/>
</dbReference>
<dbReference type="PROSITE" id="PS01085">
    <property type="entry name" value="RIBUL_P_3_EPIMER_1"/>
    <property type="match status" value="1"/>
</dbReference>
<dbReference type="PROSITE" id="PS01086">
    <property type="entry name" value="RIBUL_P_3_EPIMER_2"/>
    <property type="match status" value="1"/>
</dbReference>
<feature type="chain" id="PRO_0000171569" description="Ribulose-phosphate 3-epimerase">
    <location>
        <begin position="1"/>
        <end position="225"/>
    </location>
</feature>
<feature type="active site" description="Proton acceptor" evidence="1">
    <location>
        <position position="36"/>
    </location>
</feature>
<feature type="active site" description="Proton donor" evidence="1">
    <location>
        <position position="177"/>
    </location>
</feature>
<feature type="binding site" evidence="1">
    <location>
        <position position="9"/>
    </location>
    <ligand>
        <name>substrate</name>
    </ligand>
</feature>
<feature type="binding site" evidence="1">
    <location>
        <position position="34"/>
    </location>
    <ligand>
        <name>a divalent metal cation</name>
        <dbReference type="ChEBI" id="CHEBI:60240"/>
    </ligand>
</feature>
<feature type="binding site" evidence="1">
    <location>
        <position position="36"/>
    </location>
    <ligand>
        <name>a divalent metal cation</name>
        <dbReference type="ChEBI" id="CHEBI:60240"/>
    </ligand>
</feature>
<feature type="binding site" evidence="1">
    <location>
        <position position="68"/>
    </location>
    <ligand>
        <name>a divalent metal cation</name>
        <dbReference type="ChEBI" id="CHEBI:60240"/>
    </ligand>
</feature>
<feature type="binding site" evidence="1">
    <location>
        <position position="68"/>
    </location>
    <ligand>
        <name>substrate</name>
    </ligand>
</feature>
<feature type="binding site" evidence="1">
    <location>
        <begin position="144"/>
        <end position="147"/>
    </location>
    <ligand>
        <name>substrate</name>
    </ligand>
</feature>
<feature type="binding site" evidence="1">
    <location>
        <begin position="177"/>
        <end position="179"/>
    </location>
    <ligand>
        <name>substrate</name>
    </ligand>
</feature>
<feature type="binding site" evidence="1">
    <location>
        <position position="177"/>
    </location>
    <ligand>
        <name>a divalent metal cation</name>
        <dbReference type="ChEBI" id="CHEBI:60240"/>
    </ligand>
</feature>
<feature type="binding site" evidence="1">
    <location>
        <begin position="199"/>
        <end position="200"/>
    </location>
    <ligand>
        <name>substrate</name>
    </ligand>
</feature>
<organism>
    <name type="scientific">Escherichia coli O157:H7</name>
    <dbReference type="NCBI Taxonomy" id="83334"/>
    <lineage>
        <taxon>Bacteria</taxon>
        <taxon>Pseudomonadati</taxon>
        <taxon>Pseudomonadota</taxon>
        <taxon>Gammaproteobacteria</taxon>
        <taxon>Enterobacterales</taxon>
        <taxon>Enterobacteriaceae</taxon>
        <taxon>Escherichia</taxon>
    </lineage>
</organism>
<gene>
    <name evidence="1" type="primary">rpe</name>
    <name type="ordered locus">Z4739</name>
    <name type="ordered locus">ECs4228</name>
</gene>
<comment type="function">
    <text evidence="1">Catalyzes the reversible epimerization of D-ribulose 5-phosphate to D-xylulose 5-phosphate.</text>
</comment>
<comment type="catalytic activity">
    <reaction evidence="1">
        <text>D-ribulose 5-phosphate = D-xylulose 5-phosphate</text>
        <dbReference type="Rhea" id="RHEA:13677"/>
        <dbReference type="ChEBI" id="CHEBI:57737"/>
        <dbReference type="ChEBI" id="CHEBI:58121"/>
        <dbReference type="EC" id="5.1.3.1"/>
    </reaction>
</comment>
<comment type="cofactor">
    <cofactor evidence="1">
        <name>a divalent metal cation</name>
        <dbReference type="ChEBI" id="CHEBI:60240"/>
    </cofactor>
    <text evidence="1">Binds 1 divalent metal cation per subunit.</text>
</comment>
<comment type="pathway">
    <text evidence="1">Carbohydrate degradation.</text>
</comment>
<comment type="similarity">
    <text evidence="1">Belongs to the ribulose-phosphate 3-epimerase family.</text>
</comment>
<accession>P0AG09</accession>
<accession>P32661</accession>
<name>RPE_ECO57</name>
<sequence length="225" mass="24554">MKQYLIAPSILSADFARLGEDTAKALAAGADVVHFDVMDNHYVPNLTIGPMVLKSLRNYGITAPIDVHLMVKPVDRIVPDFAAAGASIITFHPEASEHVDRTLQLIKENGCKAGLVFNPATPLSYLDYVMDKLDVILLMSVNPGFGGQSFIPQTLDKLREVRRRIDESGFDIRLEVDGGVKVNNIGEIAAAGADMFVAGSAIFDQPDYKKVIDEMRSELAKVSHE</sequence>
<reference key="1">
    <citation type="journal article" date="2001" name="Nature">
        <title>Genome sequence of enterohaemorrhagic Escherichia coli O157:H7.</title>
        <authorList>
            <person name="Perna N.T."/>
            <person name="Plunkett G. III"/>
            <person name="Burland V."/>
            <person name="Mau B."/>
            <person name="Glasner J.D."/>
            <person name="Rose D.J."/>
            <person name="Mayhew G.F."/>
            <person name="Evans P.S."/>
            <person name="Gregor J."/>
            <person name="Kirkpatrick H.A."/>
            <person name="Posfai G."/>
            <person name="Hackett J."/>
            <person name="Klink S."/>
            <person name="Boutin A."/>
            <person name="Shao Y."/>
            <person name="Miller L."/>
            <person name="Grotbeck E.J."/>
            <person name="Davis N.W."/>
            <person name="Lim A."/>
            <person name="Dimalanta E.T."/>
            <person name="Potamousis K."/>
            <person name="Apodaca J."/>
            <person name="Anantharaman T.S."/>
            <person name="Lin J."/>
            <person name="Yen G."/>
            <person name="Schwartz D.C."/>
            <person name="Welch R.A."/>
            <person name="Blattner F.R."/>
        </authorList>
    </citation>
    <scope>NUCLEOTIDE SEQUENCE [LARGE SCALE GENOMIC DNA]</scope>
    <source>
        <strain>O157:H7 / EDL933 / ATCC 700927 / EHEC</strain>
    </source>
</reference>
<reference key="2">
    <citation type="journal article" date="2001" name="DNA Res.">
        <title>Complete genome sequence of enterohemorrhagic Escherichia coli O157:H7 and genomic comparison with a laboratory strain K-12.</title>
        <authorList>
            <person name="Hayashi T."/>
            <person name="Makino K."/>
            <person name="Ohnishi M."/>
            <person name="Kurokawa K."/>
            <person name="Ishii K."/>
            <person name="Yokoyama K."/>
            <person name="Han C.-G."/>
            <person name="Ohtsubo E."/>
            <person name="Nakayama K."/>
            <person name="Murata T."/>
            <person name="Tanaka M."/>
            <person name="Tobe T."/>
            <person name="Iida T."/>
            <person name="Takami H."/>
            <person name="Honda T."/>
            <person name="Sasakawa C."/>
            <person name="Ogasawara N."/>
            <person name="Yasunaga T."/>
            <person name="Kuhara S."/>
            <person name="Shiba T."/>
            <person name="Hattori M."/>
            <person name="Shinagawa H."/>
        </authorList>
    </citation>
    <scope>NUCLEOTIDE SEQUENCE [LARGE SCALE GENOMIC DNA]</scope>
    <source>
        <strain>O157:H7 / Sakai / RIMD 0509952 / EHEC</strain>
    </source>
</reference>
<protein>
    <recommendedName>
        <fullName evidence="1">Ribulose-phosphate 3-epimerase</fullName>
        <ecNumber evidence="1">5.1.3.1</ecNumber>
    </recommendedName>
</protein>
<evidence type="ECO:0000255" key="1">
    <source>
        <dbReference type="HAMAP-Rule" id="MF_02227"/>
    </source>
</evidence>